<sequence length="239" mass="26470">MSLMKEMLSVGVHFGHKKAFWNPQMKEYIFGINHGVHIINLEKTVPLFQDAVNFVGKTVANGGKILFVGTKRQAQDIVEAEAKRCGMSFVSHRWLGGMLTNYKTVRQSIKRLAQLEKMREDGTLESLTKKEMLQNIRTIEKLEKVLGGIKEMGGLPDAIVVIDSNKEHIAIQEAQKLGIKVVAIVDTNSNPEGIDYIIPGNDDAVKSISFYMKKFADAVIDAQGLDRAVEAKADEAAQA</sequence>
<name>RS2_FRATT</name>
<reference key="1">
    <citation type="journal article" date="2005" name="Nat. Genet.">
        <title>The complete genome sequence of Francisella tularensis, the causative agent of tularemia.</title>
        <authorList>
            <person name="Larsson P."/>
            <person name="Oyston P.C.F."/>
            <person name="Chain P."/>
            <person name="Chu M.C."/>
            <person name="Duffield M."/>
            <person name="Fuxelius H.-H."/>
            <person name="Garcia E."/>
            <person name="Haelltorp G."/>
            <person name="Johansson D."/>
            <person name="Isherwood K.E."/>
            <person name="Karp P.D."/>
            <person name="Larsson E."/>
            <person name="Liu Y."/>
            <person name="Michell S."/>
            <person name="Prior J."/>
            <person name="Prior R."/>
            <person name="Malfatti S."/>
            <person name="Sjoestedt A."/>
            <person name="Svensson K."/>
            <person name="Thompson N."/>
            <person name="Vergez L."/>
            <person name="Wagg J.K."/>
            <person name="Wren B.W."/>
            <person name="Lindler L.E."/>
            <person name="Andersson S.G.E."/>
            <person name="Forsman M."/>
            <person name="Titball R.W."/>
        </authorList>
    </citation>
    <scope>NUCLEOTIDE SEQUENCE [LARGE SCALE GENOMIC DNA]</scope>
    <source>
        <strain>SCHU S4 / Schu 4</strain>
    </source>
</reference>
<proteinExistence type="inferred from homology"/>
<protein>
    <recommendedName>
        <fullName evidence="1">Small ribosomal subunit protein uS2</fullName>
    </recommendedName>
    <alternativeName>
        <fullName evidence="2">30S ribosomal protein S2</fullName>
    </alternativeName>
</protein>
<gene>
    <name evidence="1" type="primary">rpsB</name>
    <name type="ordered locus">FTT_0313</name>
</gene>
<dbReference type="EMBL" id="AJ749949">
    <property type="protein sequence ID" value="CAG44946.1"/>
    <property type="molecule type" value="Genomic_DNA"/>
</dbReference>
<dbReference type="RefSeq" id="WP_003021616.1">
    <property type="nucleotide sequence ID" value="NC_006570.2"/>
</dbReference>
<dbReference type="RefSeq" id="YP_169362.1">
    <property type="nucleotide sequence ID" value="NC_006570.2"/>
</dbReference>
<dbReference type="SMR" id="Q5NHY0"/>
<dbReference type="STRING" id="177416.FTT_0313"/>
<dbReference type="DNASU" id="3191975"/>
<dbReference type="EnsemblBacteria" id="CAG44946">
    <property type="protein sequence ID" value="CAG44946"/>
    <property type="gene ID" value="FTT_0313"/>
</dbReference>
<dbReference type="KEGG" id="ftu:FTT_0313"/>
<dbReference type="eggNOG" id="COG0052">
    <property type="taxonomic scope" value="Bacteria"/>
</dbReference>
<dbReference type="OrthoDB" id="9808036at2"/>
<dbReference type="Proteomes" id="UP000001174">
    <property type="component" value="Chromosome"/>
</dbReference>
<dbReference type="GO" id="GO:0022627">
    <property type="term" value="C:cytosolic small ribosomal subunit"/>
    <property type="evidence" value="ECO:0007669"/>
    <property type="project" value="TreeGrafter"/>
</dbReference>
<dbReference type="GO" id="GO:0003735">
    <property type="term" value="F:structural constituent of ribosome"/>
    <property type="evidence" value="ECO:0007669"/>
    <property type="project" value="InterPro"/>
</dbReference>
<dbReference type="GO" id="GO:0006412">
    <property type="term" value="P:translation"/>
    <property type="evidence" value="ECO:0007669"/>
    <property type="project" value="UniProtKB-UniRule"/>
</dbReference>
<dbReference type="CDD" id="cd01425">
    <property type="entry name" value="RPS2"/>
    <property type="match status" value="1"/>
</dbReference>
<dbReference type="FunFam" id="1.10.287.610:FF:000001">
    <property type="entry name" value="30S ribosomal protein S2"/>
    <property type="match status" value="1"/>
</dbReference>
<dbReference type="Gene3D" id="3.40.50.10490">
    <property type="entry name" value="Glucose-6-phosphate isomerase like protein, domain 1"/>
    <property type="match status" value="1"/>
</dbReference>
<dbReference type="Gene3D" id="1.10.287.610">
    <property type="entry name" value="Helix hairpin bin"/>
    <property type="match status" value="1"/>
</dbReference>
<dbReference type="HAMAP" id="MF_00291_B">
    <property type="entry name" value="Ribosomal_uS2_B"/>
    <property type="match status" value="1"/>
</dbReference>
<dbReference type="InterPro" id="IPR001865">
    <property type="entry name" value="Ribosomal_uS2"/>
</dbReference>
<dbReference type="InterPro" id="IPR005706">
    <property type="entry name" value="Ribosomal_uS2_bac/mit/plastid"/>
</dbReference>
<dbReference type="InterPro" id="IPR023591">
    <property type="entry name" value="Ribosomal_uS2_flav_dom_sf"/>
</dbReference>
<dbReference type="NCBIfam" id="TIGR01011">
    <property type="entry name" value="rpsB_bact"/>
    <property type="match status" value="1"/>
</dbReference>
<dbReference type="PANTHER" id="PTHR12534">
    <property type="entry name" value="30S RIBOSOMAL PROTEIN S2 PROKARYOTIC AND ORGANELLAR"/>
    <property type="match status" value="1"/>
</dbReference>
<dbReference type="PANTHER" id="PTHR12534:SF0">
    <property type="entry name" value="SMALL RIBOSOMAL SUBUNIT PROTEIN US2M"/>
    <property type="match status" value="1"/>
</dbReference>
<dbReference type="Pfam" id="PF00318">
    <property type="entry name" value="Ribosomal_S2"/>
    <property type="match status" value="1"/>
</dbReference>
<dbReference type="PRINTS" id="PR00395">
    <property type="entry name" value="RIBOSOMALS2"/>
</dbReference>
<dbReference type="SUPFAM" id="SSF52313">
    <property type="entry name" value="Ribosomal protein S2"/>
    <property type="match status" value="1"/>
</dbReference>
<keyword id="KW-1185">Reference proteome</keyword>
<keyword id="KW-0687">Ribonucleoprotein</keyword>
<keyword id="KW-0689">Ribosomal protein</keyword>
<evidence type="ECO:0000255" key="1">
    <source>
        <dbReference type="HAMAP-Rule" id="MF_00291"/>
    </source>
</evidence>
<evidence type="ECO:0000305" key="2"/>
<accession>Q5NHY0</accession>
<comment type="similarity">
    <text evidence="1">Belongs to the universal ribosomal protein uS2 family.</text>
</comment>
<organism>
    <name type="scientific">Francisella tularensis subsp. tularensis (strain SCHU S4 / Schu 4)</name>
    <dbReference type="NCBI Taxonomy" id="177416"/>
    <lineage>
        <taxon>Bacteria</taxon>
        <taxon>Pseudomonadati</taxon>
        <taxon>Pseudomonadota</taxon>
        <taxon>Gammaproteobacteria</taxon>
        <taxon>Thiotrichales</taxon>
        <taxon>Francisellaceae</taxon>
        <taxon>Francisella</taxon>
    </lineage>
</organism>
<feature type="chain" id="PRO_0000134170" description="Small ribosomal subunit protein uS2">
    <location>
        <begin position="1"/>
        <end position="239"/>
    </location>
</feature>